<comment type="function">
    <text evidence="1 3">BrlA, abaA and wetA are pivotal regulators of conidiophore development and conidium maturation (By similarity). They act individually and together to regulate their own expression and that of numerous other sporulation-specific genes (By similarity). Plays a crucial role in pigmentation and conidial cell wall integrity (PubMed:25530311).</text>
</comment>
<comment type="disruption phenotype">
    <text evidence="3">Totally blocks pigmentation of conidia and leads to colonies with on a white tinge (PubMed:25530311).</text>
</comment>
<comment type="similarity">
    <text evidence="5">Belongs to the wetA family.</text>
</comment>
<name>WETA_PEND2</name>
<proteinExistence type="inferred from homology"/>
<evidence type="ECO:0000250" key="1">
    <source>
        <dbReference type="UniProtKB" id="P22022"/>
    </source>
</evidence>
<evidence type="ECO:0000256" key="2">
    <source>
        <dbReference type="SAM" id="MobiDB-lite"/>
    </source>
</evidence>
<evidence type="ECO:0000269" key="3">
    <source>
    </source>
</evidence>
<evidence type="ECO:0000303" key="4">
    <source>
    </source>
</evidence>
<evidence type="ECO:0000305" key="5"/>
<gene>
    <name evidence="4" type="primary">wetA</name>
    <name type="ORF">PDIG_73870</name>
</gene>
<organism>
    <name type="scientific">Penicillium digitatum (strain PHI26 / CECT 20796)</name>
    <name type="common">Green mold</name>
    <dbReference type="NCBI Taxonomy" id="1170229"/>
    <lineage>
        <taxon>Eukaryota</taxon>
        <taxon>Fungi</taxon>
        <taxon>Dikarya</taxon>
        <taxon>Ascomycota</taxon>
        <taxon>Pezizomycotina</taxon>
        <taxon>Eurotiomycetes</taxon>
        <taxon>Eurotiomycetidae</taxon>
        <taxon>Eurotiales</taxon>
        <taxon>Aspergillaceae</taxon>
        <taxon>Penicillium</taxon>
    </lineage>
</organism>
<reference key="1">
    <citation type="journal article" date="2012" name="BMC Genomics">
        <title>Genome sequence of the necrotrophic fungus Penicillium digitatum, the main postharvest pathogen of citrus.</title>
        <authorList>
            <person name="Marcet-Houben M."/>
            <person name="Ballester A.-R."/>
            <person name="de la Fuente B."/>
            <person name="Harries E."/>
            <person name="Marcos J.F."/>
            <person name="Gonzalez-Candelas L."/>
            <person name="Gabaldon T."/>
        </authorList>
    </citation>
    <scope>NUCLEOTIDE SEQUENCE [LARGE SCALE GENOMIC DNA]</scope>
    <source>
        <strain>PHI26 / CECT 20796</strain>
    </source>
</reference>
<reference key="2">
    <citation type="journal article" date="2015" name="Res. Microbiol.">
        <title>PdbrlA, PdabaA and PdwetA control distinct stages of conidiogenesis in Penicillium digitatum.</title>
        <authorList>
            <person name="Wang M."/>
            <person name="Sun X."/>
            <person name="Zhu C."/>
            <person name="Xu Q."/>
            <person name="Ruan R."/>
            <person name="Yu D."/>
            <person name="Li H."/>
        </authorList>
    </citation>
    <scope>FUNCTION</scope>
    <scope>DISRUPTION PHENOTYPE</scope>
</reference>
<protein>
    <recommendedName>
        <fullName evidence="5">Developmental regulatory protein wetA</fullName>
    </recommendedName>
</protein>
<sequence length="520" mass="57121">MFAQPYDHSFNDLFNQYVNMETSAADGKDSTLSDFDQLFPLDSLSSDCGDLPPTVSTPNCHQSPQPWSNEWSLQNDGPAVDHFAFHDTVPLSAISDVNLNNFEVLSRPTATHALSTSPSTPPATPRRKPTQSALITPKSIRHRCPNERRSHLCKQSFSPSLMRSSNLSKARMAYPEAWAQQIQSFSLQSSEDRLPLSPPPSDVLIQHENRPAEQIMHQTRDSVEMPSQYDARLYHQPPSVSMPSPNIAMSARQPQHYIAHPSSSTLTNSSPSSADDMFSSSHSSDPHSLSSWQSDHLHPPSFSFTPDLQCQDSQWWSPMTSRVAQQQASYLTSPTPVRTMQSVGSQNDIMQGGLMIQFNPSYDMPADHSFSSNNMLPVAPQKFDTSFTTSQVHNVSRSPSLSPKAGTSPRDTHNGSISKPVHRRTHSRKLSGQSMNAPKPAKASGSSSRGSNKSVSVSFVNFTAHDSKKILTGVAPSGSSKTKARREQEARDRRRKLSEAALRAVRSAGGDVEALEAVLC</sequence>
<dbReference type="EMBL" id="JH993737">
    <property type="protein sequence ID" value="EKV07113.1"/>
    <property type="molecule type" value="Genomic_DNA"/>
</dbReference>
<dbReference type="STRING" id="1170229.K9FWK0"/>
<dbReference type="eggNOG" id="ENOG502S8IT">
    <property type="taxonomic scope" value="Eukaryota"/>
</dbReference>
<dbReference type="HOGENOM" id="CLU_030750_0_0_1"/>
<dbReference type="InParanoid" id="K9FWK0"/>
<dbReference type="OMA" id="MFAQPFD"/>
<dbReference type="OrthoDB" id="123296at5073"/>
<dbReference type="Proteomes" id="UP000009882">
    <property type="component" value="Unassembled WGS sequence"/>
</dbReference>
<dbReference type="GO" id="GO:0048315">
    <property type="term" value="P:conidium formation"/>
    <property type="evidence" value="ECO:0007669"/>
    <property type="project" value="UniProtKB-KW"/>
</dbReference>
<dbReference type="GO" id="GO:0030435">
    <property type="term" value="P:sporulation resulting in formation of a cellular spore"/>
    <property type="evidence" value="ECO:0007669"/>
    <property type="project" value="UniProtKB-KW"/>
</dbReference>
<dbReference type="InterPro" id="IPR040112">
    <property type="entry name" value="WetA"/>
</dbReference>
<dbReference type="PANTHER" id="PTHR22934:SF25">
    <property type="entry name" value="DEVELOPMENTAL REGULATORY PROTEIN WETA"/>
    <property type="match status" value="1"/>
</dbReference>
<dbReference type="PANTHER" id="PTHR22934">
    <property type="entry name" value="PROTEIN ESC1/WETA-RELATED"/>
    <property type="match status" value="1"/>
</dbReference>
<feature type="chain" id="PRO_0000435929" description="Developmental regulatory protein wetA">
    <location>
        <begin position="1"/>
        <end position="520"/>
    </location>
</feature>
<feature type="region of interest" description="Disordered" evidence="2">
    <location>
        <begin position="110"/>
        <end position="149"/>
    </location>
</feature>
<feature type="region of interest" description="Disordered" evidence="2">
    <location>
        <begin position="260"/>
        <end position="294"/>
    </location>
</feature>
<feature type="region of interest" description="Disordered" evidence="2">
    <location>
        <begin position="388"/>
        <end position="453"/>
    </location>
</feature>
<feature type="region of interest" description="Disordered" evidence="2">
    <location>
        <begin position="471"/>
        <end position="496"/>
    </location>
</feature>
<feature type="compositionally biased region" description="Low complexity" evidence="2">
    <location>
        <begin position="261"/>
        <end position="294"/>
    </location>
</feature>
<feature type="compositionally biased region" description="Polar residues" evidence="2">
    <location>
        <begin position="388"/>
        <end position="401"/>
    </location>
</feature>
<feature type="compositionally biased region" description="Basic residues" evidence="2">
    <location>
        <begin position="420"/>
        <end position="429"/>
    </location>
</feature>
<feature type="compositionally biased region" description="Low complexity" evidence="2">
    <location>
        <begin position="436"/>
        <end position="453"/>
    </location>
</feature>
<accession>K9FWK0</accession>
<keyword id="KW-0010">Activator</keyword>
<keyword id="KW-0183">Conidiation</keyword>
<keyword id="KW-1185">Reference proteome</keyword>
<keyword id="KW-0749">Sporulation</keyword>
<keyword id="KW-0804">Transcription</keyword>
<keyword id="KW-0805">Transcription regulation</keyword>